<gene>
    <name evidence="1" type="primary">psbN</name>
</gene>
<feature type="chain" id="PRO_0000207911" description="Protein PsbN">
    <location>
        <begin position="1"/>
        <end position="43"/>
    </location>
</feature>
<feature type="transmembrane region" description="Helical" evidence="1">
    <location>
        <begin position="5"/>
        <end position="27"/>
    </location>
</feature>
<sequence>METATLVAISISGSLVSFTGYALYTAFGQPSQQLRDPFEEHGD</sequence>
<geneLocation type="chloroplast"/>
<dbReference type="EMBL" id="AF123853">
    <property type="protein sequence ID" value="AAG26291.1"/>
    <property type="molecule type" value="Genomic_DNA"/>
</dbReference>
<dbReference type="SMR" id="Q7J190"/>
<dbReference type="GO" id="GO:0009535">
    <property type="term" value="C:chloroplast thylakoid membrane"/>
    <property type="evidence" value="ECO:0007669"/>
    <property type="project" value="UniProtKB-SubCell"/>
</dbReference>
<dbReference type="GO" id="GO:0015979">
    <property type="term" value="P:photosynthesis"/>
    <property type="evidence" value="ECO:0007669"/>
    <property type="project" value="InterPro"/>
</dbReference>
<dbReference type="HAMAP" id="MF_00293">
    <property type="entry name" value="PSII_PsbN"/>
    <property type="match status" value="1"/>
</dbReference>
<dbReference type="InterPro" id="IPR003398">
    <property type="entry name" value="PSII_PsbN"/>
</dbReference>
<dbReference type="PANTHER" id="PTHR35326">
    <property type="entry name" value="PROTEIN PSBN"/>
    <property type="match status" value="1"/>
</dbReference>
<dbReference type="PANTHER" id="PTHR35326:SF3">
    <property type="entry name" value="PROTEIN PSBN"/>
    <property type="match status" value="1"/>
</dbReference>
<dbReference type="Pfam" id="PF02468">
    <property type="entry name" value="PsbN"/>
    <property type="match status" value="1"/>
</dbReference>
<evidence type="ECO:0000255" key="1">
    <source>
        <dbReference type="HAMAP-Rule" id="MF_00293"/>
    </source>
</evidence>
<accession>Q7J190</accession>
<organism>
    <name type="scientific">Illicium parviflorum</name>
    <name type="common">Yellow anise tree</name>
    <name type="synonym">Badianifera parviflora</name>
    <dbReference type="NCBI Taxonomy" id="13099"/>
    <lineage>
        <taxon>Eukaryota</taxon>
        <taxon>Viridiplantae</taxon>
        <taxon>Streptophyta</taxon>
        <taxon>Embryophyta</taxon>
        <taxon>Tracheophyta</taxon>
        <taxon>Spermatophyta</taxon>
        <taxon>Magnoliopsida</taxon>
        <taxon>Austrobaileyales</taxon>
        <taxon>Schisandraceae</taxon>
        <taxon>Illicium</taxon>
    </lineage>
</organism>
<name>PSBN_ILLPA</name>
<keyword id="KW-0150">Chloroplast</keyword>
<keyword id="KW-0472">Membrane</keyword>
<keyword id="KW-0934">Plastid</keyword>
<keyword id="KW-0793">Thylakoid</keyword>
<keyword id="KW-0812">Transmembrane</keyword>
<keyword id="KW-1133">Transmembrane helix</keyword>
<reference key="1">
    <citation type="journal article" date="2000" name="Am. J. Bot.">
        <title>Utility of 17 chloroplast genes for inferring the phylogeny of the basal angiosperms.</title>
        <authorList>
            <person name="Graham S.W."/>
            <person name="Olmstead R.G."/>
        </authorList>
    </citation>
    <scope>NUCLEOTIDE SEQUENCE [GENOMIC DNA]</scope>
</reference>
<protein>
    <recommendedName>
        <fullName evidence="1">Protein PsbN</fullName>
    </recommendedName>
</protein>
<proteinExistence type="inferred from homology"/>
<comment type="function">
    <text evidence="1">May play a role in photosystem I and II biogenesis.</text>
</comment>
<comment type="subcellular location">
    <subcellularLocation>
        <location evidence="1">Plastid</location>
        <location evidence="1">Chloroplast thylakoid membrane</location>
        <topology evidence="1">Single-pass membrane protein</topology>
    </subcellularLocation>
</comment>
<comment type="similarity">
    <text evidence="1">Belongs to the PsbN family.</text>
</comment>
<comment type="caution">
    <text evidence="1">Originally thought to be a component of PSII; based on experiments in Synechocystis, N.tabacum and barley, and its absence from PSII in T.elongatus and T.vulcanus, this is probably not true.</text>
</comment>